<evidence type="ECO:0000255" key="1">
    <source>
        <dbReference type="HAMAP-Rule" id="MF_01220"/>
    </source>
</evidence>
<keyword id="KW-0067">ATP-binding</keyword>
<keyword id="KW-0963">Cytoplasm</keyword>
<keyword id="KW-0418">Kinase</keyword>
<keyword id="KW-0547">Nucleotide-binding</keyword>
<keyword id="KW-0665">Pyrimidine biosynthesis</keyword>
<keyword id="KW-1185">Reference proteome</keyword>
<keyword id="KW-0808">Transferase</keyword>
<name>PYRH_PROMM</name>
<gene>
    <name evidence="1" type="primary">pyrH</name>
    <name type="synonym">smbA</name>
    <name type="ordered locus">PMT_1244</name>
</gene>
<organism>
    <name type="scientific">Prochlorococcus marinus (strain MIT 9313)</name>
    <dbReference type="NCBI Taxonomy" id="74547"/>
    <lineage>
        <taxon>Bacteria</taxon>
        <taxon>Bacillati</taxon>
        <taxon>Cyanobacteriota</taxon>
        <taxon>Cyanophyceae</taxon>
        <taxon>Synechococcales</taxon>
        <taxon>Prochlorococcaceae</taxon>
        <taxon>Prochlorococcus</taxon>
    </lineage>
</organism>
<proteinExistence type="inferred from homology"/>
<protein>
    <recommendedName>
        <fullName evidence="1">Uridylate kinase</fullName>
        <shortName evidence="1">UK</shortName>
        <ecNumber evidence="1">2.7.4.22</ecNumber>
    </recommendedName>
    <alternativeName>
        <fullName evidence="1">Uridine monophosphate kinase</fullName>
        <shortName evidence="1">UMP kinase</shortName>
        <shortName evidence="1">UMPK</shortName>
    </alternativeName>
</protein>
<dbReference type="EC" id="2.7.4.22" evidence="1"/>
<dbReference type="EMBL" id="BX548175">
    <property type="protein sequence ID" value="CAE21419.1"/>
    <property type="molecule type" value="Genomic_DNA"/>
</dbReference>
<dbReference type="RefSeq" id="WP_011130613.1">
    <property type="nucleotide sequence ID" value="NC_005071.1"/>
</dbReference>
<dbReference type="SMR" id="Q7V6C2"/>
<dbReference type="KEGG" id="pmt:PMT_1244"/>
<dbReference type="eggNOG" id="COG0528">
    <property type="taxonomic scope" value="Bacteria"/>
</dbReference>
<dbReference type="HOGENOM" id="CLU_033861_0_0_3"/>
<dbReference type="OrthoDB" id="9807458at2"/>
<dbReference type="UniPathway" id="UPA00159">
    <property type="reaction ID" value="UER00275"/>
</dbReference>
<dbReference type="Proteomes" id="UP000001423">
    <property type="component" value="Chromosome"/>
</dbReference>
<dbReference type="GO" id="GO:0005737">
    <property type="term" value="C:cytoplasm"/>
    <property type="evidence" value="ECO:0007669"/>
    <property type="project" value="UniProtKB-SubCell"/>
</dbReference>
<dbReference type="GO" id="GO:0005524">
    <property type="term" value="F:ATP binding"/>
    <property type="evidence" value="ECO:0007669"/>
    <property type="project" value="UniProtKB-KW"/>
</dbReference>
<dbReference type="GO" id="GO:0033862">
    <property type="term" value="F:UMP kinase activity"/>
    <property type="evidence" value="ECO:0007669"/>
    <property type="project" value="UniProtKB-EC"/>
</dbReference>
<dbReference type="GO" id="GO:0044210">
    <property type="term" value="P:'de novo' CTP biosynthetic process"/>
    <property type="evidence" value="ECO:0007669"/>
    <property type="project" value="UniProtKB-UniRule"/>
</dbReference>
<dbReference type="GO" id="GO:0006225">
    <property type="term" value="P:UDP biosynthetic process"/>
    <property type="evidence" value="ECO:0007669"/>
    <property type="project" value="TreeGrafter"/>
</dbReference>
<dbReference type="CDD" id="cd04254">
    <property type="entry name" value="AAK_UMPK-PyrH-Ec"/>
    <property type="match status" value="1"/>
</dbReference>
<dbReference type="FunFam" id="3.40.1160.10:FF:000001">
    <property type="entry name" value="Uridylate kinase"/>
    <property type="match status" value="1"/>
</dbReference>
<dbReference type="Gene3D" id="3.40.1160.10">
    <property type="entry name" value="Acetylglutamate kinase-like"/>
    <property type="match status" value="1"/>
</dbReference>
<dbReference type="HAMAP" id="MF_01220_B">
    <property type="entry name" value="PyrH_B"/>
    <property type="match status" value="1"/>
</dbReference>
<dbReference type="InterPro" id="IPR036393">
    <property type="entry name" value="AceGlu_kinase-like_sf"/>
</dbReference>
<dbReference type="InterPro" id="IPR001048">
    <property type="entry name" value="Asp/Glu/Uridylate_kinase"/>
</dbReference>
<dbReference type="InterPro" id="IPR011817">
    <property type="entry name" value="Uridylate_kinase"/>
</dbReference>
<dbReference type="InterPro" id="IPR015963">
    <property type="entry name" value="Uridylate_kinase_bac"/>
</dbReference>
<dbReference type="NCBIfam" id="TIGR02075">
    <property type="entry name" value="pyrH_bact"/>
    <property type="match status" value="1"/>
</dbReference>
<dbReference type="PANTHER" id="PTHR42833">
    <property type="entry name" value="URIDYLATE KINASE"/>
    <property type="match status" value="1"/>
</dbReference>
<dbReference type="PANTHER" id="PTHR42833:SF4">
    <property type="entry name" value="URIDYLATE KINASE PUMPKIN, CHLOROPLASTIC"/>
    <property type="match status" value="1"/>
</dbReference>
<dbReference type="Pfam" id="PF00696">
    <property type="entry name" value="AA_kinase"/>
    <property type="match status" value="1"/>
</dbReference>
<dbReference type="PIRSF" id="PIRSF005650">
    <property type="entry name" value="Uridylate_kin"/>
    <property type="match status" value="1"/>
</dbReference>
<dbReference type="SUPFAM" id="SSF53633">
    <property type="entry name" value="Carbamate kinase-like"/>
    <property type="match status" value="1"/>
</dbReference>
<feature type="chain" id="PRO_0000323922" description="Uridylate kinase">
    <location>
        <begin position="1"/>
        <end position="237"/>
    </location>
</feature>
<feature type="binding site" evidence="1">
    <location>
        <begin position="9"/>
        <end position="12"/>
    </location>
    <ligand>
        <name>ATP</name>
        <dbReference type="ChEBI" id="CHEBI:30616"/>
    </ligand>
</feature>
<feature type="binding site" evidence="1">
    <location>
        <position position="51"/>
    </location>
    <ligand>
        <name>UMP</name>
        <dbReference type="ChEBI" id="CHEBI:57865"/>
    </ligand>
</feature>
<feature type="binding site" evidence="1">
    <location>
        <position position="52"/>
    </location>
    <ligand>
        <name>ATP</name>
        <dbReference type="ChEBI" id="CHEBI:30616"/>
    </ligand>
</feature>
<feature type="binding site" evidence="1">
    <location>
        <position position="56"/>
    </location>
    <ligand>
        <name>ATP</name>
        <dbReference type="ChEBI" id="CHEBI:30616"/>
    </ligand>
</feature>
<feature type="binding site" evidence="1">
    <location>
        <position position="71"/>
    </location>
    <ligand>
        <name>UMP</name>
        <dbReference type="ChEBI" id="CHEBI:57865"/>
    </ligand>
</feature>
<feature type="binding site" evidence="1">
    <location>
        <begin position="132"/>
        <end position="139"/>
    </location>
    <ligand>
        <name>UMP</name>
        <dbReference type="ChEBI" id="CHEBI:57865"/>
    </ligand>
</feature>
<feature type="binding site" evidence="1">
    <location>
        <position position="159"/>
    </location>
    <ligand>
        <name>ATP</name>
        <dbReference type="ChEBI" id="CHEBI:30616"/>
    </ligand>
</feature>
<feature type="binding site" evidence="1">
    <location>
        <position position="165"/>
    </location>
    <ligand>
        <name>ATP</name>
        <dbReference type="ChEBI" id="CHEBI:30616"/>
    </ligand>
</feature>
<feature type="binding site" evidence="1">
    <location>
        <position position="168"/>
    </location>
    <ligand>
        <name>ATP</name>
        <dbReference type="ChEBI" id="CHEBI:30616"/>
    </ligand>
</feature>
<sequence length="237" mass="25145">MAYARVLLKLSGEALMGDQSYGIDPAIVQSIAEDVAKVVAKGTQLAIVVGGGNIFRGLKGSAAGMDRATADYVGMLATVMNAITLQDGLERAGVPTRVQTAIEMQEVAEPYIRRRAIRHLEKGRVVVFGGGCGNPFFTTDTTASLRAAEINADVVFKATKVDGVYDRDPKRFPDATRYDSLTFQQVLSGELAVMDSTAIALCKDNNIPIVVFDLFEPGNIGKAVAGEAIGSRISNAT</sequence>
<comment type="function">
    <text evidence="1">Catalyzes the reversible phosphorylation of UMP to UDP.</text>
</comment>
<comment type="catalytic activity">
    <reaction evidence="1">
        <text>UMP + ATP = UDP + ADP</text>
        <dbReference type="Rhea" id="RHEA:24400"/>
        <dbReference type="ChEBI" id="CHEBI:30616"/>
        <dbReference type="ChEBI" id="CHEBI:57865"/>
        <dbReference type="ChEBI" id="CHEBI:58223"/>
        <dbReference type="ChEBI" id="CHEBI:456216"/>
        <dbReference type="EC" id="2.7.4.22"/>
    </reaction>
</comment>
<comment type="activity regulation">
    <text evidence="1">Inhibited by UTP.</text>
</comment>
<comment type="pathway">
    <text evidence="1">Pyrimidine metabolism; CTP biosynthesis via de novo pathway; UDP from UMP (UMPK route): step 1/1.</text>
</comment>
<comment type="subunit">
    <text evidence="1">Homohexamer.</text>
</comment>
<comment type="subcellular location">
    <subcellularLocation>
        <location evidence="1">Cytoplasm</location>
    </subcellularLocation>
</comment>
<comment type="similarity">
    <text evidence="1">Belongs to the UMP kinase family.</text>
</comment>
<reference key="1">
    <citation type="journal article" date="2003" name="Nature">
        <title>Genome divergence in two Prochlorococcus ecotypes reflects oceanic niche differentiation.</title>
        <authorList>
            <person name="Rocap G."/>
            <person name="Larimer F.W."/>
            <person name="Lamerdin J.E."/>
            <person name="Malfatti S."/>
            <person name="Chain P."/>
            <person name="Ahlgren N.A."/>
            <person name="Arellano A."/>
            <person name="Coleman M."/>
            <person name="Hauser L."/>
            <person name="Hess W.R."/>
            <person name="Johnson Z.I."/>
            <person name="Land M.L."/>
            <person name="Lindell D."/>
            <person name="Post A.F."/>
            <person name="Regala W."/>
            <person name="Shah M."/>
            <person name="Shaw S.L."/>
            <person name="Steglich C."/>
            <person name="Sullivan M.B."/>
            <person name="Ting C.S."/>
            <person name="Tolonen A."/>
            <person name="Webb E.A."/>
            <person name="Zinser E.R."/>
            <person name="Chisholm S.W."/>
        </authorList>
    </citation>
    <scope>NUCLEOTIDE SEQUENCE [LARGE SCALE GENOMIC DNA]</scope>
    <source>
        <strain>MIT 9313</strain>
    </source>
</reference>
<accession>Q7V6C2</accession>